<keyword id="KW-0903">Direct protein sequencing</keyword>
<keyword id="KW-1185">Reference proteome</keyword>
<keyword id="KW-0677">Repeat</keyword>
<keyword id="KW-0346">Stress response</keyword>
<reference key="1">
    <citation type="journal article" date="1992" name="J. Bacteriol.">
        <title>Transcriptional regulation of Bacillus subtilis glucose starvation-inducible genes: control of gsiA by the ComP-ComA signal transduction system.</title>
        <authorList>
            <person name="Mueller J.P."/>
            <person name="Bukusoglu G."/>
            <person name="Sonenshein A.L."/>
        </authorList>
    </citation>
    <scope>NUCLEOTIDE SEQUENCE [GENOMIC DNA]</scope>
    <source>
        <strain>168</strain>
    </source>
</reference>
<reference key="2">
    <citation type="submission" date="1997-03" db="EMBL/GenBank/DDBJ databases">
        <title>A 148 kbp sequence of the region between 35 and 47 degree of the Bacillus subtilis genome.</title>
        <authorList>
            <person name="Kasahara Y."/>
            <person name="Nakai S."/>
            <person name="Lee S."/>
            <person name="Sadaie Y."/>
            <person name="Ogasawara N."/>
        </authorList>
    </citation>
    <scope>NUCLEOTIDE SEQUENCE [GENOMIC DNA]</scope>
    <source>
        <strain>168</strain>
    </source>
</reference>
<reference key="3">
    <citation type="journal article" date="1997" name="Nature">
        <title>The complete genome sequence of the Gram-positive bacterium Bacillus subtilis.</title>
        <authorList>
            <person name="Kunst F."/>
            <person name="Ogasawara N."/>
            <person name="Moszer I."/>
            <person name="Albertini A.M."/>
            <person name="Alloni G."/>
            <person name="Azevedo V."/>
            <person name="Bertero M.G."/>
            <person name="Bessieres P."/>
            <person name="Bolotin A."/>
            <person name="Borchert S."/>
            <person name="Borriss R."/>
            <person name="Boursier L."/>
            <person name="Brans A."/>
            <person name="Braun M."/>
            <person name="Brignell S.C."/>
            <person name="Bron S."/>
            <person name="Brouillet S."/>
            <person name="Bruschi C.V."/>
            <person name="Caldwell B."/>
            <person name="Capuano V."/>
            <person name="Carter N.M."/>
            <person name="Choi S.-K."/>
            <person name="Codani J.-J."/>
            <person name="Connerton I.F."/>
            <person name="Cummings N.J."/>
            <person name="Daniel R.A."/>
            <person name="Denizot F."/>
            <person name="Devine K.M."/>
            <person name="Duesterhoeft A."/>
            <person name="Ehrlich S.D."/>
            <person name="Emmerson P.T."/>
            <person name="Entian K.-D."/>
            <person name="Errington J."/>
            <person name="Fabret C."/>
            <person name="Ferrari E."/>
            <person name="Foulger D."/>
            <person name="Fritz C."/>
            <person name="Fujita M."/>
            <person name="Fujita Y."/>
            <person name="Fuma S."/>
            <person name="Galizzi A."/>
            <person name="Galleron N."/>
            <person name="Ghim S.-Y."/>
            <person name="Glaser P."/>
            <person name="Goffeau A."/>
            <person name="Golightly E.J."/>
            <person name="Grandi G."/>
            <person name="Guiseppi G."/>
            <person name="Guy B.J."/>
            <person name="Haga K."/>
            <person name="Haiech J."/>
            <person name="Harwood C.R."/>
            <person name="Henaut A."/>
            <person name="Hilbert H."/>
            <person name="Holsappel S."/>
            <person name="Hosono S."/>
            <person name="Hullo M.-F."/>
            <person name="Itaya M."/>
            <person name="Jones L.-M."/>
            <person name="Joris B."/>
            <person name="Karamata D."/>
            <person name="Kasahara Y."/>
            <person name="Klaerr-Blanchard M."/>
            <person name="Klein C."/>
            <person name="Kobayashi Y."/>
            <person name="Koetter P."/>
            <person name="Koningstein G."/>
            <person name="Krogh S."/>
            <person name="Kumano M."/>
            <person name="Kurita K."/>
            <person name="Lapidus A."/>
            <person name="Lardinois S."/>
            <person name="Lauber J."/>
            <person name="Lazarevic V."/>
            <person name="Lee S.-M."/>
            <person name="Levine A."/>
            <person name="Liu H."/>
            <person name="Masuda S."/>
            <person name="Mauel C."/>
            <person name="Medigue C."/>
            <person name="Medina N."/>
            <person name="Mellado R.P."/>
            <person name="Mizuno M."/>
            <person name="Moestl D."/>
            <person name="Nakai S."/>
            <person name="Noback M."/>
            <person name="Noone D."/>
            <person name="O'Reilly M."/>
            <person name="Ogawa K."/>
            <person name="Ogiwara A."/>
            <person name="Oudega B."/>
            <person name="Park S.-H."/>
            <person name="Parro V."/>
            <person name="Pohl T.M."/>
            <person name="Portetelle D."/>
            <person name="Porwollik S."/>
            <person name="Prescott A.M."/>
            <person name="Presecan E."/>
            <person name="Pujic P."/>
            <person name="Purnelle B."/>
            <person name="Rapoport G."/>
            <person name="Rey M."/>
            <person name="Reynolds S."/>
            <person name="Rieger M."/>
            <person name="Rivolta C."/>
            <person name="Rocha E."/>
            <person name="Roche B."/>
            <person name="Rose M."/>
            <person name="Sadaie Y."/>
            <person name="Sato T."/>
            <person name="Scanlan E."/>
            <person name="Schleich S."/>
            <person name="Schroeter R."/>
            <person name="Scoffone F."/>
            <person name="Sekiguchi J."/>
            <person name="Sekowska A."/>
            <person name="Seror S.J."/>
            <person name="Serror P."/>
            <person name="Shin B.-S."/>
            <person name="Soldo B."/>
            <person name="Sorokin A."/>
            <person name="Tacconi E."/>
            <person name="Takagi T."/>
            <person name="Takahashi H."/>
            <person name="Takemaru K."/>
            <person name="Takeuchi M."/>
            <person name="Tamakoshi A."/>
            <person name="Tanaka T."/>
            <person name="Terpstra P."/>
            <person name="Tognoni A."/>
            <person name="Tosato V."/>
            <person name="Uchiyama S."/>
            <person name="Vandenbol M."/>
            <person name="Vannier F."/>
            <person name="Vassarotti A."/>
            <person name="Viari A."/>
            <person name="Wambutt R."/>
            <person name="Wedler E."/>
            <person name="Wedler H."/>
            <person name="Weitzenegger T."/>
            <person name="Winters P."/>
            <person name="Wipat A."/>
            <person name="Yamamoto H."/>
            <person name="Yamane K."/>
            <person name="Yasumoto K."/>
            <person name="Yata K."/>
            <person name="Yoshida K."/>
            <person name="Yoshikawa H.-F."/>
            <person name="Zumstein E."/>
            <person name="Yoshikawa H."/>
            <person name="Danchin A."/>
        </authorList>
    </citation>
    <scope>NUCLEOTIDE SEQUENCE [LARGE SCALE GENOMIC DNA]</scope>
    <source>
        <strain>168</strain>
    </source>
</reference>
<reference key="4">
    <citation type="journal article" date="1994" name="Microbiology">
        <title>Analysis of the induction of general stress proteins of Bacillus subtilis.</title>
        <authorList>
            <person name="Voelker U."/>
            <person name="Engelmann S."/>
            <person name="Maul B."/>
            <person name="Riethdorf S."/>
            <person name="Voelker A."/>
            <person name="Schmid R."/>
            <person name="Mach H."/>
            <person name="Hecker M."/>
        </authorList>
    </citation>
    <scope>PROTEIN SEQUENCE OF 2-10</scope>
    <source>
        <strain>168 / IS58</strain>
    </source>
</reference>
<protein>
    <recommendedName>
        <fullName>Glucose starvation-inducible protein B</fullName>
    </recommendedName>
    <alternativeName>
        <fullName>General stress protein B</fullName>
    </alternativeName>
</protein>
<evidence type="ECO:0000256" key="1">
    <source>
        <dbReference type="SAM" id="MobiDB-lite"/>
    </source>
</evidence>
<evidence type="ECO:0000269" key="2">
    <source>
    </source>
</evidence>
<feature type="initiator methionine" description="Removed" evidence="2">
    <location>
        <position position="1"/>
    </location>
</feature>
<feature type="chain" id="PRO_0000083866" description="Glucose starvation-inducible protein B">
    <location>
        <begin position="2"/>
        <end position="123"/>
    </location>
</feature>
<feature type="repeat" description="1">
    <location>
        <begin position="13"/>
        <end position="32"/>
    </location>
</feature>
<feature type="repeat" description="2">
    <location>
        <begin position="33"/>
        <end position="52"/>
    </location>
</feature>
<feature type="repeat" description="3">
    <location>
        <begin position="53"/>
        <end position="72"/>
    </location>
</feature>
<feature type="repeat" description="4">
    <location>
        <begin position="73"/>
        <end position="92"/>
    </location>
</feature>
<feature type="repeat" description="5">
    <location>
        <begin position="93"/>
        <end position="112"/>
    </location>
</feature>
<feature type="region of interest" description="Disordered" evidence="1">
    <location>
        <begin position="1"/>
        <end position="123"/>
    </location>
</feature>
<feature type="region of interest" description="5 X 20 AA approximate tandem repeats">
    <location>
        <begin position="13"/>
        <end position="120"/>
    </location>
</feature>
<feature type="compositionally biased region" description="Basic and acidic residues" evidence="1">
    <location>
        <begin position="1"/>
        <end position="29"/>
    </location>
</feature>
<feature type="compositionally biased region" description="Basic and acidic residues" evidence="1">
    <location>
        <begin position="41"/>
        <end position="109"/>
    </location>
</feature>
<dbReference type="EMBL" id="X56680">
    <property type="protein sequence ID" value="CAA40009.1"/>
    <property type="molecule type" value="Genomic_DNA"/>
</dbReference>
<dbReference type="EMBL" id="AB001488">
    <property type="protein sequence ID" value="BAA19277.1"/>
    <property type="molecule type" value="Genomic_DNA"/>
</dbReference>
<dbReference type="EMBL" id="AL009126">
    <property type="protein sequence ID" value="CAB12247.1"/>
    <property type="molecule type" value="Genomic_DNA"/>
</dbReference>
<dbReference type="PIR" id="S26183">
    <property type="entry name" value="S26183"/>
</dbReference>
<dbReference type="RefSeq" id="NP_388321.1">
    <property type="nucleotide sequence ID" value="NC_000964.3"/>
</dbReference>
<dbReference type="RefSeq" id="WP_003246542.1">
    <property type="nucleotide sequence ID" value="NZ_OZ025638.1"/>
</dbReference>
<dbReference type="FunCoup" id="P26907">
    <property type="interactions" value="74"/>
</dbReference>
<dbReference type="STRING" id="224308.BSU04400"/>
<dbReference type="PaxDb" id="224308-BSU04400"/>
<dbReference type="EnsemblBacteria" id="CAB12247">
    <property type="protein sequence ID" value="CAB12247"/>
    <property type="gene ID" value="BSU_04400"/>
</dbReference>
<dbReference type="GeneID" id="938235"/>
<dbReference type="KEGG" id="bsu:BSU04400"/>
<dbReference type="PATRIC" id="fig|224308.179.peg.466"/>
<dbReference type="eggNOG" id="COG3729">
    <property type="taxonomic scope" value="Bacteria"/>
</dbReference>
<dbReference type="InParanoid" id="P26907"/>
<dbReference type="OrthoDB" id="9780487at2"/>
<dbReference type="BioCyc" id="BSUB:BSU04400-MONOMER"/>
<dbReference type="Proteomes" id="UP000001570">
    <property type="component" value="Chromosome"/>
</dbReference>
<dbReference type="InterPro" id="IPR019626">
    <property type="entry name" value="Stress-induced_KGG_rpt"/>
</dbReference>
<dbReference type="InterPro" id="IPR052590">
    <property type="entry name" value="Stress/Virulence-Domain"/>
</dbReference>
<dbReference type="PANTHER" id="PTHR36569">
    <property type="match status" value="1"/>
</dbReference>
<dbReference type="PANTHER" id="PTHR36569:SF5">
    <property type="entry name" value="CONIDIATION-SPECIFIC PROTEIN 10 (EUROFUNG)"/>
    <property type="match status" value="1"/>
</dbReference>
<dbReference type="Pfam" id="PF10685">
    <property type="entry name" value="KGG"/>
    <property type="match status" value="5"/>
</dbReference>
<gene>
    <name type="primary">gsiB</name>
    <name type="ordered locus">BSU04400</name>
</gene>
<organism>
    <name type="scientific">Bacillus subtilis (strain 168)</name>
    <dbReference type="NCBI Taxonomy" id="224308"/>
    <lineage>
        <taxon>Bacteria</taxon>
        <taxon>Bacillati</taxon>
        <taxon>Bacillota</taxon>
        <taxon>Bacilli</taxon>
        <taxon>Bacillales</taxon>
        <taxon>Bacillaceae</taxon>
        <taxon>Bacillus</taxon>
    </lineage>
</organism>
<accession>P26907</accession>
<name>GSIB_BACSU</name>
<comment type="function">
    <text>Involved in an adaptive response to nutrient deprivation other than sporulation.</text>
</comment>
<comment type="induction">
    <text>Glucose or phosphate starvation, and addition of decoyinine. Also by heat shock, salt stress and oxidative stress.</text>
</comment>
<comment type="domain">
    <text>Consists mostly of well conserved tandem repeats.</text>
</comment>
<comment type="miscellaneous">
    <text>Glucose deprivation induces sporulation and several other adaptive responses.</text>
</comment>
<proteinExistence type="evidence at protein level"/>
<sequence length="123" mass="13798">MADNNKMSREEAGRKGGETTSKNHDKEFYQEIGQKGGEATSKNHDKEFYQEIGEKGGEATSKNHDKEFYQEIGEKGGEATSENHDKEFYQEIGRKGGEATSKNHDKEFYQEIGSKGGNARNND</sequence>